<reference key="1">
    <citation type="submission" date="2004-11" db="EMBL/GenBank/DDBJ databases">
        <authorList>
            <consortium name="The German cDNA consortium"/>
        </authorList>
    </citation>
    <scope>NUCLEOTIDE SEQUENCE [LARGE SCALE MRNA]</scope>
    <source>
        <tissue>Brain cortex</tissue>
    </source>
</reference>
<feature type="chain" id="PRO_0000310430" description="DDB1- and CUL4-associated factor 13">
    <location>
        <begin position="1"/>
        <end position="445"/>
    </location>
</feature>
<feature type="repeat" description="WD 1">
    <location>
        <begin position="64"/>
        <end position="104"/>
    </location>
</feature>
<feature type="repeat" description="WD 2">
    <location>
        <begin position="107"/>
        <end position="146"/>
    </location>
</feature>
<feature type="repeat" description="WD 3">
    <location>
        <begin position="149"/>
        <end position="191"/>
    </location>
</feature>
<feature type="repeat" description="WD 4">
    <location>
        <begin position="194"/>
        <end position="234"/>
    </location>
</feature>
<feature type="repeat" description="WD 5">
    <location>
        <begin position="236"/>
        <end position="276"/>
    </location>
</feature>
<feature type="repeat" description="WD 6">
    <location>
        <begin position="280"/>
        <end position="319"/>
    </location>
</feature>
<feature type="repeat" description="WD 7">
    <location>
        <begin position="323"/>
        <end position="362"/>
    </location>
</feature>
<feature type="region of interest" description="Required for nucleolar location" evidence="1">
    <location>
        <begin position="353"/>
        <end position="441"/>
    </location>
</feature>
<feature type="modified residue" description="N6-acetyllysine" evidence="2">
    <location>
        <position position="49"/>
    </location>
</feature>
<protein>
    <recommendedName>
        <fullName>DDB1- and CUL4-associated factor 13</fullName>
    </recommendedName>
    <alternativeName>
        <fullName>WD repeat and SOF domain-containing protein 1</fullName>
    </alternativeName>
</protein>
<name>DCA13_PONAB</name>
<sequence length="445" mass="51320">MKVKMLSRNPDNYVRETKLDLQRVPRNYDPTLHPFEVPREYVRALNATKLERVFAKPFLASLDGHRDGVNCLAKHPKNLATVLSGACDGEVRIWNLTQRNCIRTIQAHEGFVRGICTRFCGTSFFTVGDDKTVKQWKMDGPGYGDEEEPLHTILGKTVYTGIDHHWKEAVFATCGQQVDIWDEQRTNPVCSMTWGFDSISSVKFNPIETFLLGSCASDRNIVLYDMRQATPLKKVILDMRTNTICWNPMEAFIFTAANEDYNLYTFDMSALDTPVMVHMDHVSAVLDVDYSPTGKEFVSASFDKSIRIFPVDKSRSREVYHTKRMQHVICVKWTSDSKYIMCGSDEMNIRLWKANASEKLGVLTSREKAAKDYNQKLKEKFQHYPHIKRIARHRHLPKSIYSQIQEQRIMKEARRRKEVNRIKHSKPGSVPIVSEKKKHVVAVVK</sequence>
<proteinExistence type="evidence at transcript level"/>
<gene>
    <name type="primary">DCAF13</name>
    <name type="synonym">WDSOF1</name>
</gene>
<dbReference type="EMBL" id="CR861153">
    <property type="protein sequence ID" value="CAH93228.1"/>
    <property type="molecule type" value="mRNA"/>
</dbReference>
<dbReference type="RefSeq" id="NP_001126898.1">
    <property type="nucleotide sequence ID" value="NM_001133426.1"/>
</dbReference>
<dbReference type="SMR" id="Q5R4T8"/>
<dbReference type="FunCoup" id="Q5R4T8">
    <property type="interactions" value="3254"/>
</dbReference>
<dbReference type="STRING" id="9601.ENSPPYP00000021100"/>
<dbReference type="GeneID" id="100173913"/>
<dbReference type="KEGG" id="pon:100173913"/>
<dbReference type="CTD" id="25879"/>
<dbReference type="eggNOG" id="KOG0268">
    <property type="taxonomic scope" value="Eukaryota"/>
</dbReference>
<dbReference type="InParanoid" id="Q5R4T8"/>
<dbReference type="OrthoDB" id="10249065at2759"/>
<dbReference type="UniPathway" id="UPA00143"/>
<dbReference type="Proteomes" id="UP000001595">
    <property type="component" value="Unplaced"/>
</dbReference>
<dbReference type="GO" id="GO:0080008">
    <property type="term" value="C:Cul4-RING E3 ubiquitin ligase complex"/>
    <property type="evidence" value="ECO:0000250"/>
    <property type="project" value="UniProtKB"/>
</dbReference>
<dbReference type="GO" id="GO:0005730">
    <property type="term" value="C:nucleolus"/>
    <property type="evidence" value="ECO:0000250"/>
    <property type="project" value="UniProtKB"/>
</dbReference>
<dbReference type="GO" id="GO:0032040">
    <property type="term" value="C:small-subunit processome"/>
    <property type="evidence" value="ECO:0007669"/>
    <property type="project" value="TreeGrafter"/>
</dbReference>
<dbReference type="GO" id="GO:1990756">
    <property type="term" value="F:ubiquitin-like ligase-substrate adaptor activity"/>
    <property type="evidence" value="ECO:0000250"/>
    <property type="project" value="UniProtKB"/>
</dbReference>
<dbReference type="GO" id="GO:0046697">
    <property type="term" value="P:decidualization"/>
    <property type="evidence" value="ECO:0000250"/>
    <property type="project" value="UniProtKB"/>
</dbReference>
<dbReference type="GO" id="GO:0000462">
    <property type="term" value="P:maturation of SSU-rRNA from tricistronic rRNA transcript (SSU-rRNA, 5.8S rRNA, LSU-rRNA)"/>
    <property type="evidence" value="ECO:0007669"/>
    <property type="project" value="TreeGrafter"/>
</dbReference>
<dbReference type="GO" id="GO:0001555">
    <property type="term" value="P:oocyte growth"/>
    <property type="evidence" value="ECO:0000250"/>
    <property type="project" value="UniProtKB"/>
</dbReference>
<dbReference type="GO" id="GO:0016567">
    <property type="term" value="P:protein ubiquitination"/>
    <property type="evidence" value="ECO:0007669"/>
    <property type="project" value="UniProtKB-UniPathway"/>
</dbReference>
<dbReference type="GO" id="GO:0006364">
    <property type="term" value="P:rRNA processing"/>
    <property type="evidence" value="ECO:0000250"/>
    <property type="project" value="UniProtKB"/>
</dbReference>
<dbReference type="CDD" id="cd00200">
    <property type="entry name" value="WD40"/>
    <property type="match status" value="1"/>
</dbReference>
<dbReference type="FunFam" id="2.130.10.10:FF:000132">
    <property type="entry name" value="DDB1- and CUL4-associated factor 13"/>
    <property type="match status" value="1"/>
</dbReference>
<dbReference type="FunFam" id="2.130.10.10:FF:000269">
    <property type="entry name" value="DDB1- and CUL4-associated factor 13"/>
    <property type="match status" value="1"/>
</dbReference>
<dbReference type="Gene3D" id="2.130.10.10">
    <property type="entry name" value="YVTN repeat-like/Quinoprotein amine dehydrogenase"/>
    <property type="match status" value="2"/>
</dbReference>
<dbReference type="InterPro" id="IPR007287">
    <property type="entry name" value="Sof1"/>
</dbReference>
<dbReference type="InterPro" id="IPR015943">
    <property type="entry name" value="WD40/YVTN_repeat-like_dom_sf"/>
</dbReference>
<dbReference type="InterPro" id="IPR019775">
    <property type="entry name" value="WD40_repeat_CS"/>
</dbReference>
<dbReference type="InterPro" id="IPR036322">
    <property type="entry name" value="WD40_repeat_dom_sf"/>
</dbReference>
<dbReference type="InterPro" id="IPR001680">
    <property type="entry name" value="WD40_rpt"/>
</dbReference>
<dbReference type="InterPro" id="IPR051733">
    <property type="entry name" value="WD_repeat_DCAF13/WDSOF1"/>
</dbReference>
<dbReference type="PANTHER" id="PTHR22851:SF0">
    <property type="entry name" value="DDB1- AND CUL4-ASSOCIATED FACTOR 13"/>
    <property type="match status" value="1"/>
</dbReference>
<dbReference type="PANTHER" id="PTHR22851">
    <property type="entry name" value="U3 SMALL NUCLEOLAR RNA U3 SNORNA ASSOCIATED PROTEIN"/>
    <property type="match status" value="1"/>
</dbReference>
<dbReference type="Pfam" id="PF04158">
    <property type="entry name" value="Sof1"/>
    <property type="match status" value="1"/>
</dbReference>
<dbReference type="Pfam" id="PF00400">
    <property type="entry name" value="WD40"/>
    <property type="match status" value="5"/>
</dbReference>
<dbReference type="SMART" id="SM00320">
    <property type="entry name" value="WD40"/>
    <property type="match status" value="5"/>
</dbReference>
<dbReference type="SUPFAM" id="SSF50978">
    <property type="entry name" value="WD40 repeat-like"/>
    <property type="match status" value="1"/>
</dbReference>
<dbReference type="PROSITE" id="PS00678">
    <property type="entry name" value="WD_REPEATS_1"/>
    <property type="match status" value="1"/>
</dbReference>
<dbReference type="PROSITE" id="PS50082">
    <property type="entry name" value="WD_REPEATS_2"/>
    <property type="match status" value="3"/>
</dbReference>
<dbReference type="PROSITE" id="PS50294">
    <property type="entry name" value="WD_REPEATS_REGION"/>
    <property type="match status" value="1"/>
</dbReference>
<organism>
    <name type="scientific">Pongo abelii</name>
    <name type="common">Sumatran orangutan</name>
    <name type="synonym">Pongo pygmaeus abelii</name>
    <dbReference type="NCBI Taxonomy" id="9601"/>
    <lineage>
        <taxon>Eukaryota</taxon>
        <taxon>Metazoa</taxon>
        <taxon>Chordata</taxon>
        <taxon>Craniata</taxon>
        <taxon>Vertebrata</taxon>
        <taxon>Euteleostomi</taxon>
        <taxon>Mammalia</taxon>
        <taxon>Eutheria</taxon>
        <taxon>Euarchontoglires</taxon>
        <taxon>Primates</taxon>
        <taxon>Haplorrhini</taxon>
        <taxon>Catarrhini</taxon>
        <taxon>Hominidae</taxon>
        <taxon>Pongo</taxon>
    </lineage>
</organism>
<comment type="function">
    <text evidence="2">Part of the small subunit (SSU) processome, first precursor of the small eukaryotic ribosomal subunit. During the assembly of the SSU processome in the nucleolus, many ribosome biogenesis factors, an RNA chaperone and ribosomal proteins associate with the nascent pre-rRNA and work in concert to generate RNA folding, modifications, rearrangements and cleavage as well as targeted degradation of pre-ribosomal RNA by the RNA exosome. Participates in the 18S rRNA processing in growing oocytes, being essential for oocyte nonsurrounded nucleolus (NSN) to surrounded nucleolus (SN) transition.</text>
</comment>
<comment type="function">
    <text evidence="1 2">Substrate-recognition component of a DCX (DDB1-CUL4-X-box) E3 ubiquitin-protein ligase complex that plays a key role in embryo preimplantation and is required for normal meiotic cycle progression in oocytes (By similarity). Acts as a maternal factor that regulates oocyte and zygotic chromatin tightness during maternal to zygotic transition (By similarity). Also involved in the transformation of the endometrium into the decidua, known as decidualization, providing a solid foundation for implantation of blastocysts. Recognizes the histone methyltransferases SUV39H1 and SUV39H2 and directs them to polyubiquitination and proteasomal degradation, which facilitates the H3K9me3 removal and early zygotic gene expression, essential steps for progressive genome reprogramming and the establishment of pluripotency during preimplantation embryonic development. Supports the spindle assembly and chromosome condensation during oocyte meiotic division by targeting the polyubiquitination and degradation of PTEN, a lipid phosphatase that inhibits PI3K pathway as well as oocyte growth and maturation (By similarity). Targets PMP22 for polyubiquitination and proteasomal degradation (By similarity).</text>
</comment>
<comment type="pathway">
    <text>Protein modification; protein ubiquitination.</text>
</comment>
<comment type="subunit">
    <text evidence="2">Part of the small subunit (SSU) processome, composed of more than 70 proteins and the RNA chaperone small nucleolar RNA (snoRNA) U3. Component of the DCX(DCAF13) E3 ubiquitin ligase complex, at least composed of CUL4 (CUL4A or CUL4B), DDB1, DCAF13 and RBX1. Interacts (via WD40 domain) with DDB1. Interacts with ESR1 and LATS1.</text>
</comment>
<comment type="subcellular location">
    <subcellularLocation>
        <location evidence="2">Nucleus</location>
        <location evidence="2">Nucleolus</location>
    </subcellularLocation>
    <text evidence="2">In the nucleolus, localizes predominantly in the granular component, but also detected in the fibrillar center and dense fibrillar component.</text>
</comment>
<comment type="similarity">
    <text evidence="3">Belongs to the WD repeat DCAF13/WDSOF1 family.</text>
</comment>
<accession>Q5R4T8</accession>
<keyword id="KW-0007">Acetylation</keyword>
<keyword id="KW-0539">Nucleus</keyword>
<keyword id="KW-1185">Reference proteome</keyword>
<keyword id="KW-0677">Repeat</keyword>
<keyword id="KW-0687">Ribonucleoprotein</keyword>
<keyword id="KW-0690">Ribosome biogenesis</keyword>
<keyword id="KW-0698">rRNA processing</keyword>
<keyword id="KW-0833">Ubl conjugation pathway</keyword>
<keyword id="KW-0853">WD repeat</keyword>
<evidence type="ECO:0000250" key="1">
    <source>
        <dbReference type="UniProtKB" id="Q6PAC3"/>
    </source>
</evidence>
<evidence type="ECO:0000250" key="2">
    <source>
        <dbReference type="UniProtKB" id="Q9NV06"/>
    </source>
</evidence>
<evidence type="ECO:0000305" key="3"/>